<comment type="function">
    <text evidence="1">Iron-sulfur protein (IP) subunit of succinate dehydrogenase (SDH) that is involved in complex II of the mitochondrial electron transport chain and is responsible for transferring electrons from succinate to ubiquinone (coenzyme Q).</text>
</comment>
<comment type="catalytic activity">
    <reaction>
        <text>a quinone + succinate = fumarate + a quinol</text>
        <dbReference type="Rhea" id="RHEA:40523"/>
        <dbReference type="ChEBI" id="CHEBI:24646"/>
        <dbReference type="ChEBI" id="CHEBI:29806"/>
        <dbReference type="ChEBI" id="CHEBI:30031"/>
        <dbReference type="ChEBI" id="CHEBI:132124"/>
        <dbReference type="EC" id="1.3.5.1"/>
    </reaction>
</comment>
<comment type="cofactor">
    <cofactor evidence="1">
        <name>[2Fe-2S] cluster</name>
        <dbReference type="ChEBI" id="CHEBI:190135"/>
    </cofactor>
    <text evidence="1">Binds 1 [2Fe-2S] cluster.</text>
</comment>
<comment type="cofactor">
    <cofactor evidence="1">
        <name>[3Fe-4S] cluster</name>
        <dbReference type="ChEBI" id="CHEBI:21137"/>
    </cofactor>
    <text evidence="1">Binds 1 [3Fe-4S] cluster.</text>
</comment>
<comment type="cofactor">
    <cofactor evidence="1">
        <name>[4Fe-4S] cluster</name>
        <dbReference type="ChEBI" id="CHEBI:49883"/>
    </cofactor>
    <text evidence="1">Binds 1 [4Fe-4S] cluster.</text>
</comment>
<comment type="pathway">
    <text>Carbohydrate metabolism; tricarboxylic acid cycle; fumarate from succinate (eukaryal route): step 1/1.</text>
</comment>
<comment type="subunit">
    <text evidence="1">Component of complex II composed of four subunits: a flavoprotein (FP), an iron-sulfur protein (IP), and a cytochrome b composed of a large and a small subunit.</text>
</comment>
<comment type="subcellular location">
    <subcellularLocation>
        <location evidence="1">Mitochondrion inner membrane</location>
        <topology evidence="1">Peripheral membrane protein</topology>
        <orientation evidence="1">Matrix side</orientation>
    </subcellularLocation>
</comment>
<comment type="similarity">
    <text evidence="4">Belongs to the succinate dehydrogenase/fumarate reductase iron-sulfur protein family.</text>
</comment>
<reference key="1">
    <citation type="journal article" date="2004" name="Nature">
        <title>Genome evolution in yeasts.</title>
        <authorList>
            <person name="Dujon B."/>
            <person name="Sherman D."/>
            <person name="Fischer G."/>
            <person name="Durrens P."/>
            <person name="Casaregola S."/>
            <person name="Lafontaine I."/>
            <person name="de Montigny J."/>
            <person name="Marck C."/>
            <person name="Neuveglise C."/>
            <person name="Talla E."/>
            <person name="Goffard N."/>
            <person name="Frangeul L."/>
            <person name="Aigle M."/>
            <person name="Anthouard V."/>
            <person name="Babour A."/>
            <person name="Barbe V."/>
            <person name="Barnay S."/>
            <person name="Blanchin S."/>
            <person name="Beckerich J.-M."/>
            <person name="Beyne E."/>
            <person name="Bleykasten C."/>
            <person name="Boisrame A."/>
            <person name="Boyer J."/>
            <person name="Cattolico L."/>
            <person name="Confanioleri F."/>
            <person name="de Daruvar A."/>
            <person name="Despons L."/>
            <person name="Fabre E."/>
            <person name="Fairhead C."/>
            <person name="Ferry-Dumazet H."/>
            <person name="Groppi A."/>
            <person name="Hantraye F."/>
            <person name="Hennequin C."/>
            <person name="Jauniaux N."/>
            <person name="Joyet P."/>
            <person name="Kachouri R."/>
            <person name="Kerrest A."/>
            <person name="Koszul R."/>
            <person name="Lemaire M."/>
            <person name="Lesur I."/>
            <person name="Ma L."/>
            <person name="Muller H."/>
            <person name="Nicaud J.-M."/>
            <person name="Nikolski M."/>
            <person name="Oztas S."/>
            <person name="Ozier-Kalogeropoulos O."/>
            <person name="Pellenz S."/>
            <person name="Potier S."/>
            <person name="Richard G.-F."/>
            <person name="Straub M.-L."/>
            <person name="Suleau A."/>
            <person name="Swennen D."/>
            <person name="Tekaia F."/>
            <person name="Wesolowski-Louvel M."/>
            <person name="Westhof E."/>
            <person name="Wirth B."/>
            <person name="Zeniou-Meyer M."/>
            <person name="Zivanovic Y."/>
            <person name="Bolotin-Fukuhara M."/>
            <person name="Thierry A."/>
            <person name="Bouchier C."/>
            <person name="Caudron B."/>
            <person name="Scarpelli C."/>
            <person name="Gaillardin C."/>
            <person name="Weissenbach J."/>
            <person name="Wincker P."/>
            <person name="Souciet J.-L."/>
        </authorList>
    </citation>
    <scope>NUCLEOTIDE SEQUENCE [LARGE SCALE GENOMIC DNA]</scope>
    <source>
        <strain>ATCC 2001 / BCRC 20586 / JCM 3761 / NBRC 0622 / NRRL Y-65 / CBS 138</strain>
    </source>
</reference>
<name>SDHB_CANGA</name>
<dbReference type="EC" id="1.3.5.1"/>
<dbReference type="EMBL" id="CR380949">
    <property type="protein sequence ID" value="CAG58222.1"/>
    <property type="molecule type" value="Genomic_DNA"/>
</dbReference>
<dbReference type="RefSeq" id="XP_445316.1">
    <property type="nucleotide sequence ID" value="XM_445316.1"/>
</dbReference>
<dbReference type="SMR" id="Q6FWS8"/>
<dbReference type="FunCoup" id="Q6FWS8">
    <property type="interactions" value="774"/>
</dbReference>
<dbReference type="STRING" id="284593.Q6FWS8"/>
<dbReference type="EnsemblFungi" id="CAGL0C03223g-T">
    <property type="protein sequence ID" value="CAGL0C03223g-T-p1"/>
    <property type="gene ID" value="CAGL0C03223g"/>
</dbReference>
<dbReference type="KEGG" id="cgr:2886893"/>
<dbReference type="CGD" id="CAL0127242">
    <property type="gene designation" value="SDH2"/>
</dbReference>
<dbReference type="VEuPathDB" id="FungiDB:B1J91_C03223g"/>
<dbReference type="VEuPathDB" id="FungiDB:CAGL0C03223g"/>
<dbReference type="eggNOG" id="KOG3049">
    <property type="taxonomic scope" value="Eukaryota"/>
</dbReference>
<dbReference type="HOGENOM" id="CLU_044838_0_2_1"/>
<dbReference type="InParanoid" id="Q6FWS8"/>
<dbReference type="OMA" id="DGQYFGP"/>
<dbReference type="UniPathway" id="UPA00223">
    <property type="reaction ID" value="UER01006"/>
</dbReference>
<dbReference type="Proteomes" id="UP000002428">
    <property type="component" value="Chromosome C"/>
</dbReference>
<dbReference type="GO" id="GO:0005743">
    <property type="term" value="C:mitochondrial inner membrane"/>
    <property type="evidence" value="ECO:0007669"/>
    <property type="project" value="UniProtKB-SubCell"/>
</dbReference>
<dbReference type="GO" id="GO:0051537">
    <property type="term" value="F:2 iron, 2 sulfur cluster binding"/>
    <property type="evidence" value="ECO:0007669"/>
    <property type="project" value="UniProtKB-KW"/>
</dbReference>
<dbReference type="GO" id="GO:0051538">
    <property type="term" value="F:3 iron, 4 sulfur cluster binding"/>
    <property type="evidence" value="ECO:0007669"/>
    <property type="project" value="UniProtKB-KW"/>
</dbReference>
<dbReference type="GO" id="GO:0051539">
    <property type="term" value="F:4 iron, 4 sulfur cluster binding"/>
    <property type="evidence" value="ECO:0007669"/>
    <property type="project" value="UniProtKB-KW"/>
</dbReference>
<dbReference type="GO" id="GO:0009055">
    <property type="term" value="F:electron transfer activity"/>
    <property type="evidence" value="ECO:0007669"/>
    <property type="project" value="InterPro"/>
</dbReference>
<dbReference type="GO" id="GO:0046872">
    <property type="term" value="F:metal ion binding"/>
    <property type="evidence" value="ECO:0007669"/>
    <property type="project" value="UniProtKB-KW"/>
</dbReference>
<dbReference type="GO" id="GO:0008177">
    <property type="term" value="F:succinate dehydrogenase (quinone) activity"/>
    <property type="evidence" value="ECO:0007669"/>
    <property type="project" value="UniProtKB-EC"/>
</dbReference>
<dbReference type="GO" id="GO:0022904">
    <property type="term" value="P:respiratory electron transport chain"/>
    <property type="evidence" value="ECO:0007669"/>
    <property type="project" value="TreeGrafter"/>
</dbReference>
<dbReference type="GO" id="GO:0006099">
    <property type="term" value="P:tricarboxylic acid cycle"/>
    <property type="evidence" value="ECO:0007669"/>
    <property type="project" value="UniProtKB-UniPathway"/>
</dbReference>
<dbReference type="CDD" id="cd00207">
    <property type="entry name" value="fer2"/>
    <property type="match status" value="1"/>
</dbReference>
<dbReference type="FunFam" id="3.10.20.30:FF:000007">
    <property type="entry name" value="Succinate dehydrogenase [ubiquinone] iron-sulfur subunit, mitochondrial"/>
    <property type="match status" value="1"/>
</dbReference>
<dbReference type="FunFam" id="1.10.1060.10:FF:000001">
    <property type="entry name" value="Succinate dehydrogenase iron-sulfur subunit SdhB"/>
    <property type="match status" value="1"/>
</dbReference>
<dbReference type="Gene3D" id="3.10.20.30">
    <property type="match status" value="1"/>
</dbReference>
<dbReference type="Gene3D" id="1.10.1060.10">
    <property type="entry name" value="Alpha-helical ferredoxin"/>
    <property type="match status" value="1"/>
</dbReference>
<dbReference type="InterPro" id="IPR036010">
    <property type="entry name" value="2Fe-2S_ferredoxin-like_sf"/>
</dbReference>
<dbReference type="InterPro" id="IPR001041">
    <property type="entry name" value="2Fe-2S_ferredoxin-type"/>
</dbReference>
<dbReference type="InterPro" id="IPR006058">
    <property type="entry name" value="2Fe2S_fd_BS"/>
</dbReference>
<dbReference type="InterPro" id="IPR017896">
    <property type="entry name" value="4Fe4S_Fe-S-bd"/>
</dbReference>
<dbReference type="InterPro" id="IPR017900">
    <property type="entry name" value="4Fe4S_Fe_S_CS"/>
</dbReference>
<dbReference type="InterPro" id="IPR012675">
    <property type="entry name" value="Beta-grasp_dom_sf"/>
</dbReference>
<dbReference type="InterPro" id="IPR009051">
    <property type="entry name" value="Helical_ferredxn"/>
</dbReference>
<dbReference type="InterPro" id="IPR050573">
    <property type="entry name" value="SDH/FRD_Iron-Sulfur"/>
</dbReference>
<dbReference type="InterPro" id="IPR004489">
    <property type="entry name" value="Succ_DH/fum_Rdtase_Fe-S"/>
</dbReference>
<dbReference type="InterPro" id="IPR025192">
    <property type="entry name" value="Succ_DH/fum_Rdtase_N"/>
</dbReference>
<dbReference type="NCBIfam" id="TIGR00384">
    <property type="entry name" value="dhsB"/>
    <property type="match status" value="1"/>
</dbReference>
<dbReference type="NCBIfam" id="NF004616">
    <property type="entry name" value="PRK05950.1"/>
    <property type="match status" value="1"/>
</dbReference>
<dbReference type="PANTHER" id="PTHR11921:SF29">
    <property type="entry name" value="SUCCINATE DEHYDROGENASE [UBIQUINONE] IRON-SULFUR SUBUNIT, MITOCHONDRIAL"/>
    <property type="match status" value="1"/>
</dbReference>
<dbReference type="PANTHER" id="PTHR11921">
    <property type="entry name" value="SUCCINATE DEHYDROGENASE IRON-SULFUR PROTEIN"/>
    <property type="match status" value="1"/>
</dbReference>
<dbReference type="Pfam" id="PF13085">
    <property type="entry name" value="Fer2_3"/>
    <property type="match status" value="1"/>
</dbReference>
<dbReference type="Pfam" id="PF13534">
    <property type="entry name" value="Fer4_17"/>
    <property type="match status" value="1"/>
</dbReference>
<dbReference type="SUPFAM" id="SSF54292">
    <property type="entry name" value="2Fe-2S ferredoxin-like"/>
    <property type="match status" value="1"/>
</dbReference>
<dbReference type="SUPFAM" id="SSF46548">
    <property type="entry name" value="alpha-helical ferredoxin"/>
    <property type="match status" value="1"/>
</dbReference>
<dbReference type="PROSITE" id="PS00197">
    <property type="entry name" value="2FE2S_FER_1"/>
    <property type="match status" value="1"/>
</dbReference>
<dbReference type="PROSITE" id="PS51085">
    <property type="entry name" value="2FE2S_FER_2"/>
    <property type="match status" value="1"/>
</dbReference>
<dbReference type="PROSITE" id="PS00198">
    <property type="entry name" value="4FE4S_FER_1"/>
    <property type="match status" value="1"/>
</dbReference>
<dbReference type="PROSITE" id="PS51379">
    <property type="entry name" value="4FE4S_FER_2"/>
    <property type="match status" value="1"/>
</dbReference>
<keyword id="KW-0001">2Fe-2S</keyword>
<keyword id="KW-0003">3Fe-4S</keyword>
<keyword id="KW-0004">4Fe-4S</keyword>
<keyword id="KW-0249">Electron transport</keyword>
<keyword id="KW-0408">Iron</keyword>
<keyword id="KW-0411">Iron-sulfur</keyword>
<keyword id="KW-0472">Membrane</keyword>
<keyword id="KW-0479">Metal-binding</keyword>
<keyword id="KW-0496">Mitochondrion</keyword>
<keyword id="KW-0999">Mitochondrion inner membrane</keyword>
<keyword id="KW-0560">Oxidoreductase</keyword>
<keyword id="KW-1185">Reference proteome</keyword>
<keyword id="KW-0809">Transit peptide</keyword>
<keyword id="KW-0813">Transport</keyword>
<keyword id="KW-0816">Tricarboxylic acid cycle</keyword>
<proteinExistence type="inferred from homology"/>
<protein>
    <recommendedName>
        <fullName>Succinate dehydrogenase [ubiquinone] iron-sulfur subunit, mitochondrial</fullName>
        <ecNumber>1.3.5.1</ecNumber>
    </recommendedName>
    <alternativeName>
        <fullName>Iron-sulfur subunit of complex II</fullName>
        <shortName>Ip</shortName>
    </alternativeName>
</protein>
<feature type="transit peptide" description="Mitochondrion">
    <location>
        <begin position="1"/>
        <end status="unknown"/>
    </location>
</feature>
<feature type="chain" id="PRO_0000010348" description="Succinate dehydrogenase [ubiquinone] iron-sulfur subunit, mitochondrial">
    <location>
        <begin status="unknown"/>
        <end position="253"/>
    </location>
</feature>
<feature type="domain" description="2Fe-2S ferredoxin-type" evidence="2">
    <location>
        <begin position="23"/>
        <end position="114"/>
    </location>
</feature>
<feature type="domain" description="4Fe-4S ferredoxin-type" evidence="3">
    <location>
        <begin position="156"/>
        <end position="186"/>
    </location>
</feature>
<feature type="binding site" evidence="1">
    <location>
        <position position="74"/>
    </location>
    <ligand>
        <name>[2Fe-2S] cluster</name>
        <dbReference type="ChEBI" id="CHEBI:190135"/>
    </ligand>
</feature>
<feature type="binding site" evidence="1">
    <location>
        <position position="79"/>
    </location>
    <ligand>
        <name>[2Fe-2S] cluster</name>
        <dbReference type="ChEBI" id="CHEBI:190135"/>
    </ligand>
</feature>
<feature type="binding site" evidence="1">
    <location>
        <position position="82"/>
    </location>
    <ligand>
        <name>[2Fe-2S] cluster</name>
        <dbReference type="ChEBI" id="CHEBI:190135"/>
    </ligand>
</feature>
<feature type="binding site" evidence="1">
    <location>
        <position position="94"/>
    </location>
    <ligand>
        <name>[2Fe-2S] cluster</name>
        <dbReference type="ChEBI" id="CHEBI:190135"/>
    </ligand>
</feature>
<feature type="binding site" evidence="1">
    <location>
        <position position="166"/>
    </location>
    <ligand>
        <name>[4Fe-4S] cluster</name>
        <dbReference type="ChEBI" id="CHEBI:49883"/>
    </ligand>
</feature>
<feature type="binding site" evidence="1">
    <location>
        <position position="169"/>
    </location>
    <ligand>
        <name>[4Fe-4S] cluster</name>
        <dbReference type="ChEBI" id="CHEBI:49883"/>
    </ligand>
</feature>
<feature type="binding site" evidence="1">
    <location>
        <position position="172"/>
    </location>
    <ligand>
        <name>[4Fe-4S] cluster</name>
        <dbReference type="ChEBI" id="CHEBI:49883"/>
    </ligand>
</feature>
<feature type="binding site" evidence="1">
    <location>
        <position position="176"/>
    </location>
    <ligand>
        <name>[3Fe-4S] cluster</name>
        <dbReference type="ChEBI" id="CHEBI:21137"/>
    </ligand>
</feature>
<feature type="binding site" evidence="1">
    <location>
        <position position="181"/>
    </location>
    <ligand>
        <name>a ubiquinone</name>
        <dbReference type="ChEBI" id="CHEBI:16389"/>
        <note>ligand shared with DHSD</note>
    </ligand>
</feature>
<feature type="binding site" evidence="1">
    <location>
        <position position="223"/>
    </location>
    <ligand>
        <name>[3Fe-4S] cluster</name>
        <dbReference type="ChEBI" id="CHEBI:21137"/>
    </ligand>
</feature>
<feature type="binding site" evidence="1">
    <location>
        <position position="229"/>
    </location>
    <ligand>
        <name>[3Fe-4S] cluster</name>
        <dbReference type="ChEBI" id="CHEBI:21137"/>
    </ligand>
</feature>
<feature type="binding site" evidence="1">
    <location>
        <position position="233"/>
    </location>
    <ligand>
        <name>[4Fe-4S] cluster</name>
        <dbReference type="ChEBI" id="CHEBI:49883"/>
    </ligand>
</feature>
<evidence type="ECO:0000250" key="1"/>
<evidence type="ECO:0000255" key="2">
    <source>
        <dbReference type="PROSITE-ProRule" id="PRU00465"/>
    </source>
</evidence>
<evidence type="ECO:0000255" key="3">
    <source>
        <dbReference type="PROSITE-ProRule" id="PRU00711"/>
    </source>
</evidence>
<evidence type="ECO:0000305" key="4"/>
<sequence length="253" mass="29054">MFMLRVSRRGLATATSVPRLKTFKIYRWNPDKPTEKPHLQEYKVDLEDCGPMVLDALLKIKNEQDATLTFRRSCREGICGSCAMNIGGANTLACLCKIDQDESKTTKIYPLPHMFIVKDLVPDLTGFYQQYKSIQPYLQRTDYPADGKEVLQSIDDRKKLDGLYECILCACCSTSCPSYWWNQEEYLGPAVLMQAYRWLIDSRDQATKARRTMLQNSMSLYRCHTIMNCTRTCPKGLNPGRSIAEIKKQLAFD</sequence>
<accession>Q6FWS8</accession>
<organism>
    <name type="scientific">Candida glabrata (strain ATCC 2001 / BCRC 20586 / JCM 3761 / NBRC 0622 / NRRL Y-65 / CBS 138)</name>
    <name type="common">Yeast</name>
    <name type="synonym">Nakaseomyces glabratus</name>
    <dbReference type="NCBI Taxonomy" id="284593"/>
    <lineage>
        <taxon>Eukaryota</taxon>
        <taxon>Fungi</taxon>
        <taxon>Dikarya</taxon>
        <taxon>Ascomycota</taxon>
        <taxon>Saccharomycotina</taxon>
        <taxon>Saccharomycetes</taxon>
        <taxon>Saccharomycetales</taxon>
        <taxon>Saccharomycetaceae</taxon>
        <taxon>Nakaseomyces</taxon>
    </lineage>
</organism>
<gene>
    <name type="primary">SDH2</name>
    <name type="ordered locus">CAGL0C03223g</name>
</gene>